<reference key="1">
    <citation type="submission" date="2007-02" db="EMBL/GenBank/DDBJ databases">
        <title>Complete sequence of chromosome 1 of Rhodobacter sphaeroides ATCC 17029.</title>
        <authorList>
            <person name="Copeland A."/>
            <person name="Lucas S."/>
            <person name="Lapidus A."/>
            <person name="Barry K."/>
            <person name="Detter J.C."/>
            <person name="Glavina del Rio T."/>
            <person name="Hammon N."/>
            <person name="Israni S."/>
            <person name="Dalin E."/>
            <person name="Tice H."/>
            <person name="Pitluck S."/>
            <person name="Kiss H."/>
            <person name="Brettin T."/>
            <person name="Bruce D."/>
            <person name="Han C."/>
            <person name="Tapia R."/>
            <person name="Gilna P."/>
            <person name="Schmutz J."/>
            <person name="Larimer F."/>
            <person name="Land M."/>
            <person name="Hauser L."/>
            <person name="Kyrpides N."/>
            <person name="Mikhailova N."/>
            <person name="Richardson P."/>
            <person name="Mackenzie C."/>
            <person name="Choudhary M."/>
            <person name="Donohue T.J."/>
            <person name="Kaplan S."/>
        </authorList>
    </citation>
    <scope>NUCLEOTIDE SEQUENCE [LARGE SCALE GENOMIC DNA]</scope>
    <source>
        <strain>ATCC 17029 / ATH 2.4.9</strain>
    </source>
</reference>
<gene>
    <name evidence="1" type="primary">hisC</name>
    <name type="ordered locus">Rsph17029_0959</name>
</gene>
<keyword id="KW-0028">Amino-acid biosynthesis</keyword>
<keyword id="KW-0032">Aminotransferase</keyword>
<keyword id="KW-0368">Histidine biosynthesis</keyword>
<keyword id="KW-0663">Pyridoxal phosphate</keyword>
<keyword id="KW-0808">Transferase</keyword>
<sequence>MSDAIRPQPGILDIALYEGGKSHVAGIQNALKLSSNENPFGPSPKAKEAFLRSVHTLHRYPSTDHAGLRHAIAEVHGLDPARVICGVGSDEIITFLCQAYAGPHTDVVFTEHGFLMYRISALAVGANPVEVPERERTTDVDAILAACTPHTRLVFLANPNNPTGTMIGQADLARLAAGLPAQAILVLDGAYAEYVPGYDAGRALIEERGNVVMTRTFSKIYGLGGLRVGWGYGPKAIIDVLNRIRGPFNLSTTQLETAEAAVRDQDHVARCRADNARWRIWLAEALAEIGVPSDTSMANFILARFSDTEEAEACDLHLQTQGLIVRRVAGYKLPHCLRITIGDEASCRRVAHAIGQFKRMR</sequence>
<organism>
    <name type="scientific">Cereibacter sphaeroides (strain ATCC 17029 / ATH 2.4.9)</name>
    <name type="common">Rhodobacter sphaeroides</name>
    <dbReference type="NCBI Taxonomy" id="349101"/>
    <lineage>
        <taxon>Bacteria</taxon>
        <taxon>Pseudomonadati</taxon>
        <taxon>Pseudomonadota</taxon>
        <taxon>Alphaproteobacteria</taxon>
        <taxon>Rhodobacterales</taxon>
        <taxon>Paracoccaceae</taxon>
        <taxon>Cereibacter</taxon>
    </lineage>
</organism>
<comment type="catalytic activity">
    <reaction evidence="1">
        <text>L-histidinol phosphate + 2-oxoglutarate = 3-(imidazol-4-yl)-2-oxopropyl phosphate + L-glutamate</text>
        <dbReference type="Rhea" id="RHEA:23744"/>
        <dbReference type="ChEBI" id="CHEBI:16810"/>
        <dbReference type="ChEBI" id="CHEBI:29985"/>
        <dbReference type="ChEBI" id="CHEBI:57766"/>
        <dbReference type="ChEBI" id="CHEBI:57980"/>
        <dbReference type="EC" id="2.6.1.9"/>
    </reaction>
</comment>
<comment type="cofactor">
    <cofactor evidence="1">
        <name>pyridoxal 5'-phosphate</name>
        <dbReference type="ChEBI" id="CHEBI:597326"/>
    </cofactor>
</comment>
<comment type="pathway">
    <text evidence="1">Amino-acid biosynthesis; L-histidine biosynthesis; L-histidine from 5-phospho-alpha-D-ribose 1-diphosphate: step 7/9.</text>
</comment>
<comment type="subunit">
    <text evidence="1">Homodimer.</text>
</comment>
<comment type="similarity">
    <text evidence="1">Belongs to the class-II pyridoxal-phosphate-dependent aminotransferase family. Histidinol-phosphate aminotransferase subfamily.</text>
</comment>
<dbReference type="EC" id="2.6.1.9" evidence="1"/>
<dbReference type="EMBL" id="CP000577">
    <property type="protein sequence ID" value="ABN76070.1"/>
    <property type="molecule type" value="Genomic_DNA"/>
</dbReference>
<dbReference type="RefSeq" id="WP_009564739.1">
    <property type="nucleotide sequence ID" value="NC_009049.1"/>
</dbReference>
<dbReference type="SMR" id="A3PIA4"/>
<dbReference type="KEGG" id="rsh:Rsph17029_0959"/>
<dbReference type="HOGENOM" id="CLU_017584_3_3_5"/>
<dbReference type="UniPathway" id="UPA00031">
    <property type="reaction ID" value="UER00012"/>
</dbReference>
<dbReference type="GO" id="GO:0004400">
    <property type="term" value="F:histidinol-phosphate transaminase activity"/>
    <property type="evidence" value="ECO:0007669"/>
    <property type="project" value="UniProtKB-UniRule"/>
</dbReference>
<dbReference type="GO" id="GO:0030170">
    <property type="term" value="F:pyridoxal phosphate binding"/>
    <property type="evidence" value="ECO:0007669"/>
    <property type="project" value="InterPro"/>
</dbReference>
<dbReference type="GO" id="GO:0000105">
    <property type="term" value="P:L-histidine biosynthetic process"/>
    <property type="evidence" value="ECO:0007669"/>
    <property type="project" value="UniProtKB-UniRule"/>
</dbReference>
<dbReference type="CDD" id="cd00609">
    <property type="entry name" value="AAT_like"/>
    <property type="match status" value="1"/>
</dbReference>
<dbReference type="Gene3D" id="3.90.1150.10">
    <property type="entry name" value="Aspartate Aminotransferase, domain 1"/>
    <property type="match status" value="1"/>
</dbReference>
<dbReference type="Gene3D" id="3.40.640.10">
    <property type="entry name" value="Type I PLP-dependent aspartate aminotransferase-like (Major domain)"/>
    <property type="match status" value="1"/>
</dbReference>
<dbReference type="HAMAP" id="MF_01023">
    <property type="entry name" value="HisC_aminotrans_2"/>
    <property type="match status" value="1"/>
</dbReference>
<dbReference type="InterPro" id="IPR004839">
    <property type="entry name" value="Aminotransferase_I/II_large"/>
</dbReference>
<dbReference type="InterPro" id="IPR005861">
    <property type="entry name" value="HisP_aminotrans"/>
</dbReference>
<dbReference type="InterPro" id="IPR050106">
    <property type="entry name" value="HistidinolP_aminotransfase"/>
</dbReference>
<dbReference type="InterPro" id="IPR015424">
    <property type="entry name" value="PyrdxlP-dep_Trfase"/>
</dbReference>
<dbReference type="InterPro" id="IPR015421">
    <property type="entry name" value="PyrdxlP-dep_Trfase_major"/>
</dbReference>
<dbReference type="InterPro" id="IPR015422">
    <property type="entry name" value="PyrdxlP-dep_Trfase_small"/>
</dbReference>
<dbReference type="NCBIfam" id="TIGR01141">
    <property type="entry name" value="hisC"/>
    <property type="match status" value="1"/>
</dbReference>
<dbReference type="PANTHER" id="PTHR43643:SF3">
    <property type="entry name" value="HISTIDINOL-PHOSPHATE AMINOTRANSFERASE"/>
    <property type="match status" value="1"/>
</dbReference>
<dbReference type="PANTHER" id="PTHR43643">
    <property type="entry name" value="HISTIDINOL-PHOSPHATE AMINOTRANSFERASE 2"/>
    <property type="match status" value="1"/>
</dbReference>
<dbReference type="Pfam" id="PF00155">
    <property type="entry name" value="Aminotran_1_2"/>
    <property type="match status" value="1"/>
</dbReference>
<dbReference type="SUPFAM" id="SSF53383">
    <property type="entry name" value="PLP-dependent transferases"/>
    <property type="match status" value="1"/>
</dbReference>
<proteinExistence type="inferred from homology"/>
<accession>A3PIA4</accession>
<name>HIS8_CERS1</name>
<protein>
    <recommendedName>
        <fullName evidence="1">Histidinol-phosphate aminotransferase</fullName>
        <ecNumber evidence="1">2.6.1.9</ecNumber>
    </recommendedName>
    <alternativeName>
        <fullName evidence="1">Imidazole acetol-phosphate transaminase</fullName>
    </alternativeName>
</protein>
<evidence type="ECO:0000255" key="1">
    <source>
        <dbReference type="HAMAP-Rule" id="MF_01023"/>
    </source>
</evidence>
<feature type="chain" id="PRO_1000063496" description="Histidinol-phosphate aminotransferase">
    <location>
        <begin position="1"/>
        <end position="361"/>
    </location>
</feature>
<feature type="modified residue" description="N6-(pyridoxal phosphate)lysine" evidence="1">
    <location>
        <position position="219"/>
    </location>
</feature>